<sequence length="237" mass="24690">MAPVDIPDRDRLIVALDLPDLRVAEAMVDRLGDSVGFYKIGYQLAYAGGLPLARALVGAGKKVFVDLKLHDIGNTVARGVESLSHLGASFLTVHAYPQTMKAAVEARGSSKVKILAVTVLTSYDDRDLADAGYRFGVRDLVEARARQAQAIGVDGLVCSPEEAAHLRSIVGPEMDLVTPGIRPAGAAAGDQKRIMTPAKAIAAGASYLVVGRPVLDAPDPKAAADAIVAEIAAARGS</sequence>
<gene>
    <name evidence="1" type="primary">pyrF</name>
    <name type="ordered locus">RPA0337</name>
</gene>
<proteinExistence type="inferred from homology"/>
<keyword id="KW-0210">Decarboxylase</keyword>
<keyword id="KW-0456">Lyase</keyword>
<keyword id="KW-0665">Pyrimidine biosynthesis</keyword>
<dbReference type="EC" id="4.1.1.23" evidence="1"/>
<dbReference type="EMBL" id="BX572594">
    <property type="protein sequence ID" value="CAE25781.1"/>
    <property type="molecule type" value="Genomic_DNA"/>
</dbReference>
<dbReference type="RefSeq" id="WP_011155905.1">
    <property type="nucleotide sequence ID" value="NZ_CP116810.1"/>
</dbReference>
<dbReference type="SMR" id="Q6NCY0"/>
<dbReference type="STRING" id="258594.RPA0337"/>
<dbReference type="GeneID" id="66891348"/>
<dbReference type="eggNOG" id="COG0284">
    <property type="taxonomic scope" value="Bacteria"/>
</dbReference>
<dbReference type="HOGENOM" id="CLU_067069_1_0_5"/>
<dbReference type="PhylomeDB" id="Q6NCY0"/>
<dbReference type="UniPathway" id="UPA00070">
    <property type="reaction ID" value="UER00120"/>
</dbReference>
<dbReference type="GO" id="GO:0005829">
    <property type="term" value="C:cytosol"/>
    <property type="evidence" value="ECO:0007669"/>
    <property type="project" value="TreeGrafter"/>
</dbReference>
<dbReference type="GO" id="GO:0004590">
    <property type="term" value="F:orotidine-5'-phosphate decarboxylase activity"/>
    <property type="evidence" value="ECO:0007669"/>
    <property type="project" value="UniProtKB-UniRule"/>
</dbReference>
<dbReference type="GO" id="GO:0006207">
    <property type="term" value="P:'de novo' pyrimidine nucleobase biosynthetic process"/>
    <property type="evidence" value="ECO:0007669"/>
    <property type="project" value="InterPro"/>
</dbReference>
<dbReference type="GO" id="GO:0044205">
    <property type="term" value="P:'de novo' UMP biosynthetic process"/>
    <property type="evidence" value="ECO:0007669"/>
    <property type="project" value="UniProtKB-UniRule"/>
</dbReference>
<dbReference type="CDD" id="cd04725">
    <property type="entry name" value="OMP_decarboxylase_like"/>
    <property type="match status" value="1"/>
</dbReference>
<dbReference type="Gene3D" id="3.20.20.70">
    <property type="entry name" value="Aldolase class I"/>
    <property type="match status" value="1"/>
</dbReference>
<dbReference type="HAMAP" id="MF_01200_B">
    <property type="entry name" value="OMPdecase_type1_B"/>
    <property type="match status" value="1"/>
</dbReference>
<dbReference type="InterPro" id="IPR013785">
    <property type="entry name" value="Aldolase_TIM"/>
</dbReference>
<dbReference type="InterPro" id="IPR014732">
    <property type="entry name" value="OMPdecase"/>
</dbReference>
<dbReference type="InterPro" id="IPR018089">
    <property type="entry name" value="OMPdecase_AS"/>
</dbReference>
<dbReference type="InterPro" id="IPR047596">
    <property type="entry name" value="OMPdecase_bac"/>
</dbReference>
<dbReference type="InterPro" id="IPR001754">
    <property type="entry name" value="OMPdeCOase_dom"/>
</dbReference>
<dbReference type="InterPro" id="IPR011060">
    <property type="entry name" value="RibuloseP-bd_barrel"/>
</dbReference>
<dbReference type="NCBIfam" id="NF001273">
    <property type="entry name" value="PRK00230.1"/>
    <property type="match status" value="1"/>
</dbReference>
<dbReference type="NCBIfam" id="TIGR01740">
    <property type="entry name" value="pyrF"/>
    <property type="match status" value="1"/>
</dbReference>
<dbReference type="PANTHER" id="PTHR32119">
    <property type="entry name" value="OROTIDINE 5'-PHOSPHATE DECARBOXYLASE"/>
    <property type="match status" value="1"/>
</dbReference>
<dbReference type="PANTHER" id="PTHR32119:SF2">
    <property type="entry name" value="OROTIDINE 5'-PHOSPHATE DECARBOXYLASE"/>
    <property type="match status" value="1"/>
</dbReference>
<dbReference type="Pfam" id="PF00215">
    <property type="entry name" value="OMPdecase"/>
    <property type="match status" value="1"/>
</dbReference>
<dbReference type="SMART" id="SM00934">
    <property type="entry name" value="OMPdecase"/>
    <property type="match status" value="1"/>
</dbReference>
<dbReference type="SUPFAM" id="SSF51366">
    <property type="entry name" value="Ribulose-phoshate binding barrel"/>
    <property type="match status" value="1"/>
</dbReference>
<dbReference type="PROSITE" id="PS00156">
    <property type="entry name" value="OMPDECASE"/>
    <property type="match status" value="1"/>
</dbReference>
<feature type="chain" id="PRO_0000241898" description="Orotidine 5'-phosphate decarboxylase">
    <location>
        <begin position="1"/>
        <end position="237"/>
    </location>
</feature>
<feature type="active site" description="Proton donor" evidence="1">
    <location>
        <position position="68"/>
    </location>
</feature>
<feature type="binding site" evidence="1">
    <location>
        <position position="17"/>
    </location>
    <ligand>
        <name>substrate</name>
    </ligand>
</feature>
<feature type="binding site" evidence="1">
    <location>
        <position position="39"/>
    </location>
    <ligand>
        <name>substrate</name>
    </ligand>
</feature>
<feature type="binding site" evidence="1">
    <location>
        <begin position="66"/>
        <end position="75"/>
    </location>
    <ligand>
        <name>substrate</name>
    </ligand>
</feature>
<feature type="binding site" evidence="1">
    <location>
        <position position="121"/>
    </location>
    <ligand>
        <name>substrate</name>
    </ligand>
</feature>
<feature type="binding site" evidence="1">
    <location>
        <position position="182"/>
    </location>
    <ligand>
        <name>substrate</name>
    </ligand>
</feature>
<feature type="binding site" evidence="1">
    <location>
        <position position="191"/>
    </location>
    <ligand>
        <name>substrate</name>
    </ligand>
</feature>
<feature type="binding site" evidence="1">
    <location>
        <position position="211"/>
    </location>
    <ligand>
        <name>substrate</name>
    </ligand>
</feature>
<feature type="binding site" evidence="1">
    <location>
        <position position="212"/>
    </location>
    <ligand>
        <name>substrate</name>
    </ligand>
</feature>
<accession>Q6NCY0</accession>
<comment type="function">
    <text evidence="1">Catalyzes the decarboxylation of orotidine 5'-monophosphate (OMP) to uridine 5'-monophosphate (UMP).</text>
</comment>
<comment type="catalytic activity">
    <reaction evidence="1">
        <text>orotidine 5'-phosphate + H(+) = UMP + CO2</text>
        <dbReference type="Rhea" id="RHEA:11596"/>
        <dbReference type="ChEBI" id="CHEBI:15378"/>
        <dbReference type="ChEBI" id="CHEBI:16526"/>
        <dbReference type="ChEBI" id="CHEBI:57538"/>
        <dbReference type="ChEBI" id="CHEBI:57865"/>
        <dbReference type="EC" id="4.1.1.23"/>
    </reaction>
</comment>
<comment type="pathway">
    <text evidence="1">Pyrimidine metabolism; UMP biosynthesis via de novo pathway; UMP from orotate: step 2/2.</text>
</comment>
<comment type="subunit">
    <text evidence="1">Homodimer.</text>
</comment>
<comment type="similarity">
    <text evidence="1">Belongs to the OMP decarboxylase family. Type 1 subfamily.</text>
</comment>
<protein>
    <recommendedName>
        <fullName evidence="1">Orotidine 5'-phosphate decarboxylase</fullName>
        <ecNumber evidence="1">4.1.1.23</ecNumber>
    </recommendedName>
    <alternativeName>
        <fullName evidence="1">OMP decarboxylase</fullName>
        <shortName evidence="1">OMPDCase</shortName>
        <shortName evidence="1">OMPdecase</shortName>
    </alternativeName>
</protein>
<name>PYRF_RHOPA</name>
<reference key="1">
    <citation type="journal article" date="2004" name="Nat. Biotechnol.">
        <title>Complete genome sequence of the metabolically versatile photosynthetic bacterium Rhodopseudomonas palustris.</title>
        <authorList>
            <person name="Larimer F.W."/>
            <person name="Chain P."/>
            <person name="Hauser L."/>
            <person name="Lamerdin J.E."/>
            <person name="Malfatti S."/>
            <person name="Do L."/>
            <person name="Land M.L."/>
            <person name="Pelletier D.A."/>
            <person name="Beatty J.T."/>
            <person name="Lang A.S."/>
            <person name="Tabita F.R."/>
            <person name="Gibson J.L."/>
            <person name="Hanson T.E."/>
            <person name="Bobst C."/>
            <person name="Torres y Torres J.L."/>
            <person name="Peres C."/>
            <person name="Harrison F.H."/>
            <person name="Gibson J."/>
            <person name="Harwood C.S."/>
        </authorList>
    </citation>
    <scope>NUCLEOTIDE SEQUENCE [LARGE SCALE GENOMIC DNA]</scope>
    <source>
        <strain>ATCC BAA-98 / CGA009</strain>
    </source>
</reference>
<organism>
    <name type="scientific">Rhodopseudomonas palustris (strain ATCC BAA-98 / CGA009)</name>
    <dbReference type="NCBI Taxonomy" id="258594"/>
    <lineage>
        <taxon>Bacteria</taxon>
        <taxon>Pseudomonadati</taxon>
        <taxon>Pseudomonadota</taxon>
        <taxon>Alphaproteobacteria</taxon>
        <taxon>Hyphomicrobiales</taxon>
        <taxon>Nitrobacteraceae</taxon>
        <taxon>Rhodopseudomonas</taxon>
    </lineage>
</organism>
<evidence type="ECO:0000255" key="1">
    <source>
        <dbReference type="HAMAP-Rule" id="MF_01200"/>
    </source>
</evidence>